<name>LHTL2_ARATH</name>
<keyword id="KW-0029">Amino-acid transport</keyword>
<keyword id="KW-1003">Cell membrane</keyword>
<keyword id="KW-0472">Membrane</keyword>
<keyword id="KW-1185">Reference proteome</keyword>
<keyword id="KW-0812">Transmembrane</keyword>
<keyword id="KW-1133">Transmembrane helix</keyword>
<keyword id="KW-0813">Transport</keyword>
<proteinExistence type="evidence at transcript level"/>
<gene>
    <name type="ordered locus">At1g67640</name>
    <name type="ORF">F12A21.22</name>
    <name type="ORF">F12B7.20</name>
</gene>
<feature type="chain" id="PRO_0000387972" description="Lysine histidine transporter-like 2">
    <location>
        <begin position="1"/>
        <end position="441"/>
    </location>
</feature>
<feature type="topological domain" description="Cytoplasmic" evidence="2">
    <location>
        <begin position="1"/>
        <end position="32"/>
    </location>
</feature>
<feature type="transmembrane region" description="Helical" evidence="2">
    <location>
        <begin position="33"/>
        <end position="53"/>
    </location>
</feature>
<feature type="topological domain" description="Extracellular" evidence="2">
    <location>
        <begin position="54"/>
        <end position="58"/>
    </location>
</feature>
<feature type="transmembrane region" description="Helical" evidence="2">
    <location>
        <begin position="59"/>
        <end position="79"/>
    </location>
</feature>
<feature type="topological domain" description="Cytoplasmic" evidence="2">
    <location>
        <begin position="80"/>
        <end position="110"/>
    </location>
</feature>
<feature type="transmembrane region" description="Helical" evidence="2">
    <location>
        <begin position="111"/>
        <end position="131"/>
    </location>
</feature>
<feature type="topological domain" description="Extracellular" evidence="2">
    <location>
        <begin position="132"/>
        <end position="155"/>
    </location>
</feature>
<feature type="transmembrane region" description="Helical" evidence="2">
    <location>
        <begin position="156"/>
        <end position="176"/>
    </location>
</feature>
<feature type="transmembrane region" description="Helical" evidence="2">
    <location>
        <begin position="177"/>
        <end position="197"/>
    </location>
</feature>
<feature type="topological domain" description="Extracellular" evidence="2">
    <location>
        <begin position="198"/>
        <end position="222"/>
    </location>
</feature>
<feature type="transmembrane region" description="Helical" evidence="2">
    <location>
        <begin position="223"/>
        <end position="243"/>
    </location>
</feature>
<feature type="topological domain" description="Cytoplasmic" evidence="2">
    <location>
        <begin position="244"/>
        <end position="264"/>
    </location>
</feature>
<feature type="transmembrane region" description="Helical" evidence="2">
    <location>
        <begin position="265"/>
        <end position="285"/>
    </location>
</feature>
<feature type="topological domain" description="Extracellular" evidence="2">
    <location>
        <begin position="286"/>
        <end position="300"/>
    </location>
</feature>
<feature type="transmembrane region" description="Helical" evidence="2">
    <location>
        <begin position="301"/>
        <end position="321"/>
    </location>
</feature>
<feature type="topological domain" description="Cytoplasmic" evidence="2">
    <location>
        <begin position="322"/>
        <end position="347"/>
    </location>
</feature>
<feature type="transmembrane region" description="Helical" evidence="2">
    <location>
        <begin position="348"/>
        <end position="370"/>
    </location>
</feature>
<feature type="topological domain" description="Extracellular" evidence="2">
    <location>
        <begin position="371"/>
        <end position="373"/>
    </location>
</feature>
<feature type="transmembrane region" description="Helical" evidence="2">
    <location>
        <begin position="374"/>
        <end position="396"/>
    </location>
</feature>
<feature type="topological domain" description="Cytoplasmic" evidence="2">
    <location>
        <begin position="397"/>
        <end position="406"/>
    </location>
</feature>
<feature type="transmembrane region" description="Helical" evidence="2">
    <location>
        <begin position="407"/>
        <end position="427"/>
    </location>
</feature>
<feature type="topological domain" description="Extracellular" evidence="2">
    <location>
        <begin position="428"/>
        <end position="441"/>
    </location>
</feature>
<reference key="1">
    <citation type="journal article" date="2000" name="Nature">
        <title>Sequence and analysis of chromosome 1 of the plant Arabidopsis thaliana.</title>
        <authorList>
            <person name="Theologis A."/>
            <person name="Ecker J.R."/>
            <person name="Palm C.J."/>
            <person name="Federspiel N.A."/>
            <person name="Kaul S."/>
            <person name="White O."/>
            <person name="Alonso J."/>
            <person name="Altafi H."/>
            <person name="Araujo R."/>
            <person name="Bowman C.L."/>
            <person name="Brooks S.Y."/>
            <person name="Buehler E."/>
            <person name="Chan A."/>
            <person name="Chao Q."/>
            <person name="Chen H."/>
            <person name="Cheuk R.F."/>
            <person name="Chin C.W."/>
            <person name="Chung M.K."/>
            <person name="Conn L."/>
            <person name="Conway A.B."/>
            <person name="Conway A.R."/>
            <person name="Creasy T.H."/>
            <person name="Dewar K."/>
            <person name="Dunn P."/>
            <person name="Etgu P."/>
            <person name="Feldblyum T.V."/>
            <person name="Feng J.-D."/>
            <person name="Fong B."/>
            <person name="Fujii C.Y."/>
            <person name="Gill J.E."/>
            <person name="Goldsmith A.D."/>
            <person name="Haas B."/>
            <person name="Hansen N.F."/>
            <person name="Hughes B."/>
            <person name="Huizar L."/>
            <person name="Hunter J.L."/>
            <person name="Jenkins J."/>
            <person name="Johnson-Hopson C."/>
            <person name="Khan S."/>
            <person name="Khaykin E."/>
            <person name="Kim C.J."/>
            <person name="Koo H.L."/>
            <person name="Kremenetskaia I."/>
            <person name="Kurtz D.B."/>
            <person name="Kwan A."/>
            <person name="Lam B."/>
            <person name="Langin-Hooper S."/>
            <person name="Lee A."/>
            <person name="Lee J.M."/>
            <person name="Lenz C.A."/>
            <person name="Li J.H."/>
            <person name="Li Y.-P."/>
            <person name="Lin X."/>
            <person name="Liu S.X."/>
            <person name="Liu Z.A."/>
            <person name="Luros J.S."/>
            <person name="Maiti R."/>
            <person name="Marziali A."/>
            <person name="Militscher J."/>
            <person name="Miranda M."/>
            <person name="Nguyen M."/>
            <person name="Nierman W.C."/>
            <person name="Osborne B.I."/>
            <person name="Pai G."/>
            <person name="Peterson J."/>
            <person name="Pham P.K."/>
            <person name="Rizzo M."/>
            <person name="Rooney T."/>
            <person name="Rowley D."/>
            <person name="Sakano H."/>
            <person name="Salzberg S.L."/>
            <person name="Schwartz J.R."/>
            <person name="Shinn P."/>
            <person name="Southwick A.M."/>
            <person name="Sun H."/>
            <person name="Tallon L.J."/>
            <person name="Tambunga G."/>
            <person name="Toriumi M.J."/>
            <person name="Town C.D."/>
            <person name="Utterback T."/>
            <person name="Van Aken S."/>
            <person name="Vaysberg M."/>
            <person name="Vysotskaia V.S."/>
            <person name="Walker M."/>
            <person name="Wu D."/>
            <person name="Yu G."/>
            <person name="Fraser C.M."/>
            <person name="Venter J.C."/>
            <person name="Davis R.W."/>
        </authorList>
    </citation>
    <scope>NUCLEOTIDE SEQUENCE [LARGE SCALE GENOMIC DNA]</scope>
    <source>
        <strain>cv. Columbia</strain>
    </source>
</reference>
<reference key="2">
    <citation type="journal article" date="2017" name="Plant J.">
        <title>Araport11: a complete reannotation of the Arabidopsis thaliana reference genome.</title>
        <authorList>
            <person name="Cheng C.Y."/>
            <person name="Krishnakumar V."/>
            <person name="Chan A.P."/>
            <person name="Thibaud-Nissen F."/>
            <person name="Schobel S."/>
            <person name="Town C.D."/>
        </authorList>
    </citation>
    <scope>GENOME REANNOTATION</scope>
    <source>
        <strain>cv. Columbia</strain>
    </source>
</reference>
<reference key="3">
    <citation type="journal article" date="2006" name="Plant Biotechnol. J.">
        <title>Simultaneous high-throughput recombinational cloning of open reading frames in closed and open configurations.</title>
        <authorList>
            <person name="Underwood B.A."/>
            <person name="Vanderhaeghen R."/>
            <person name="Whitford R."/>
            <person name="Town C.D."/>
            <person name="Hilson P."/>
        </authorList>
    </citation>
    <scope>NUCLEOTIDE SEQUENCE [LARGE SCALE MRNA]</scope>
    <source>
        <strain>cv. Columbia</strain>
    </source>
</reference>
<reference key="4">
    <citation type="journal article" date="2004" name="Plant J.">
        <title>Selective expression of a novel high-affinity transport system for acidic and neutral amino acids in the tapetum cells of Arabidopsis flowers.</title>
        <authorList>
            <person name="Lee Y.-H."/>
            <person name="Tegeder M."/>
        </authorList>
    </citation>
    <scope>GENE FAMILY</scope>
    <source>
        <strain>cv. C24</strain>
    </source>
</reference>
<accession>Q9SR44</accession>
<accession>A0MEF0</accession>
<comment type="function">
    <text evidence="1">Amino acid transporter.</text>
</comment>
<comment type="subcellular location">
    <subcellularLocation>
        <location evidence="3">Cell membrane</location>
        <topology evidence="3">Multi-pass membrane protein</topology>
    </subcellularLocation>
</comment>
<comment type="similarity">
    <text evidence="3">Belongs to the amino acid/polyamine transporter 2 family. Amino acid/auxin permease (AAAP) (TC 2.A.18.2) subfamily.</text>
</comment>
<comment type="sequence caution" evidence="3">
    <conflict type="erroneous termination">
        <sequence resource="EMBL-CDS" id="ABK28455"/>
    </conflict>
    <text>Extended C-terminus.</text>
</comment>
<dbReference type="EMBL" id="AC008113">
    <property type="protein sequence ID" value="AAG28894.1"/>
    <property type="molecule type" value="Genomic_DNA"/>
</dbReference>
<dbReference type="EMBL" id="AC011020">
    <property type="protein sequence ID" value="AAG52310.1"/>
    <property type="molecule type" value="Genomic_DNA"/>
</dbReference>
<dbReference type="EMBL" id="CP002684">
    <property type="protein sequence ID" value="AEE34675.1"/>
    <property type="molecule type" value="Genomic_DNA"/>
</dbReference>
<dbReference type="EMBL" id="DQ446407">
    <property type="protein sequence ID" value="ABE65751.1"/>
    <property type="molecule type" value="mRNA"/>
</dbReference>
<dbReference type="EMBL" id="DQ652920">
    <property type="protein sequence ID" value="ABK28455.1"/>
    <property type="status" value="ALT_SEQ"/>
    <property type="molecule type" value="mRNA"/>
</dbReference>
<dbReference type="RefSeq" id="NP_176932.1">
    <property type="nucleotide sequence ID" value="NM_105432.2"/>
</dbReference>
<dbReference type="SMR" id="Q9SR44"/>
<dbReference type="FunCoup" id="Q9SR44">
    <property type="interactions" value="1"/>
</dbReference>
<dbReference type="STRING" id="3702.Q9SR44"/>
<dbReference type="PaxDb" id="3702-AT1G67640.1"/>
<dbReference type="ProteomicsDB" id="238604"/>
<dbReference type="EnsemblPlants" id="AT1G67640.1">
    <property type="protein sequence ID" value="AT1G67640.1"/>
    <property type="gene ID" value="AT1G67640"/>
</dbReference>
<dbReference type="GeneID" id="843088"/>
<dbReference type="Gramene" id="AT1G67640.1">
    <property type="protein sequence ID" value="AT1G67640.1"/>
    <property type="gene ID" value="AT1G67640"/>
</dbReference>
<dbReference type="KEGG" id="ath:AT1G67640"/>
<dbReference type="Araport" id="AT1G67640"/>
<dbReference type="TAIR" id="AT1G67640"/>
<dbReference type="eggNOG" id="KOG1303">
    <property type="taxonomic scope" value="Eukaryota"/>
</dbReference>
<dbReference type="HOGENOM" id="CLU_031160_0_0_1"/>
<dbReference type="InParanoid" id="Q9SR44"/>
<dbReference type="OMA" id="AGMFWLH"/>
<dbReference type="PhylomeDB" id="Q9SR44"/>
<dbReference type="PRO" id="PR:Q9SR44"/>
<dbReference type="Proteomes" id="UP000006548">
    <property type="component" value="Chromosome 1"/>
</dbReference>
<dbReference type="ExpressionAtlas" id="Q9SR44">
    <property type="expression patterns" value="baseline and differential"/>
</dbReference>
<dbReference type="GO" id="GO:0005886">
    <property type="term" value="C:plasma membrane"/>
    <property type="evidence" value="ECO:0007669"/>
    <property type="project" value="UniProtKB-SubCell"/>
</dbReference>
<dbReference type="GO" id="GO:0006865">
    <property type="term" value="P:amino acid transport"/>
    <property type="evidence" value="ECO:0007669"/>
    <property type="project" value="UniProtKB-KW"/>
</dbReference>
<dbReference type="FunFam" id="1.20.1740.10:FF:000033">
    <property type="entry name" value="Lysine histidine transporter 1"/>
    <property type="match status" value="1"/>
</dbReference>
<dbReference type="InterPro" id="IPR013057">
    <property type="entry name" value="AA_transpt_TM"/>
</dbReference>
<dbReference type="PANTHER" id="PTHR48017">
    <property type="entry name" value="OS05G0424000 PROTEIN-RELATED"/>
    <property type="match status" value="1"/>
</dbReference>
<dbReference type="Pfam" id="PF01490">
    <property type="entry name" value="Aa_trans"/>
    <property type="match status" value="1"/>
</dbReference>
<protein>
    <recommendedName>
        <fullName>Lysine histidine transporter-like 2</fullName>
    </recommendedName>
</protein>
<sequence length="441" mass="49421">MEKSQSSPTKDASTKQKNVDDWLPITSSRNAKWWYSAFHNVTAMVGAGVLSLPYAMSNLGWGPGVTIMIMSWLITFYTLWQMVQMHEMVPGKRFDRYHELGQHAFGEKLGLWIVVPQQLIVEVGVDIVYMVTGGKSLKKIHDLLCTDCKNIRTTYWIMIFASIHFVLAHLPNFNSISIVSLAAAVMSLSYSTIAWATSVKKGVHPNVDYSSRASTTSGNVFNFLNALGDVAFAYAGHNVVLEIQATIPSTPEKPSKIAMWKGVVVAYIVVAICYFPVAFVCYYIFGNSVDDNILMTLEKPIWLIAIANAFVVVHVIGSYQIYAMPVFDMLETFLVKKMMFAPSFKLRFITRTLYVAFTMFVAICIPFFGGLLGFFGGFAFAPTTYYLPCIMWLCIKKPKKYGLSWCINWFCIVVGVILTILAPIGGLRTIIISAKNYEFFS</sequence>
<evidence type="ECO:0000250" key="1"/>
<evidence type="ECO:0000255" key="2"/>
<evidence type="ECO:0000305" key="3"/>
<organism>
    <name type="scientific">Arabidopsis thaliana</name>
    <name type="common">Mouse-ear cress</name>
    <dbReference type="NCBI Taxonomy" id="3702"/>
    <lineage>
        <taxon>Eukaryota</taxon>
        <taxon>Viridiplantae</taxon>
        <taxon>Streptophyta</taxon>
        <taxon>Embryophyta</taxon>
        <taxon>Tracheophyta</taxon>
        <taxon>Spermatophyta</taxon>
        <taxon>Magnoliopsida</taxon>
        <taxon>eudicotyledons</taxon>
        <taxon>Gunneridae</taxon>
        <taxon>Pentapetalae</taxon>
        <taxon>rosids</taxon>
        <taxon>malvids</taxon>
        <taxon>Brassicales</taxon>
        <taxon>Brassicaceae</taxon>
        <taxon>Camelineae</taxon>
        <taxon>Arabidopsis</taxon>
    </lineage>
</organism>